<sequence>MKFSEQWVREWVNPAVSTEQLCEQITMLGLEVDGVESVAGTFNGVVVGEVVECAQHPDADKLRVTKVNVGGDRLLDIVCGAANCRQGLKVACATEGAVLPGDFKIKKTKLRGQPSEGMLCSFSELGIDVEADGIIELPLDAPIGTDLREYLALDDNAIEISLTPNRADCLSIAGIAREIGVVNKQLVNQPHFEAVPATISDKVQIDLQAPEACPRYLLRVIKNVNVKAPSPMWMQEKLRRCGIRSIDPIVDITNYILLEFGQPMHAFDAAKVTQPVQVRFAKEGEELVLLDGSTAKLQSNTLLIADQNGPLAMAGIFGGATSGVNSETKDVILESAFFAPLAIAGRARQYGLHTDASHRFERGVDFELARKAMERATTLLLEICGGEAGEICEASSETHLPKVNTVQLRRSKLDALLGHHIETGSVTEIFHRLGFDVTYANDIWTVTSASWRFDIEIEEDLIEEVARIYGYNSIPNNAPLAHLRMREHKESDLDLARIKTALVDADYQEAITYSFVDPKIQSLLHPHKEALVLPNPISVEMSAMRVSLISGLLGAVLYNQNRQQSRVRLFETGLRFVPDANAEFGVRQEFVLSAVITGTAKSEHWAGKAESVDFFDLKGDLESVLSLTEGGNRVRFVAKQFDALHPGQSAAIELDGQEIGFIGAIHPSISQKLGLNGKTFVFEILWNAIAARNVVQAKEISKFPANRRDLALVVADSVPAGELIAACKQAGGEKLVQVNLFDVYQGVGVAEGYKSLAISLTVQDNEKTLEDEEINAVISAVLAEVKQRFNAELRD</sequence>
<accession>Q4QKM3</accession>
<dbReference type="EC" id="6.1.1.20" evidence="1"/>
<dbReference type="EMBL" id="CP000057">
    <property type="protein sequence ID" value="AAX88424.1"/>
    <property type="molecule type" value="Genomic_DNA"/>
</dbReference>
<dbReference type="RefSeq" id="WP_011272568.1">
    <property type="nucleotide sequence ID" value="NC_007146.2"/>
</dbReference>
<dbReference type="SMR" id="Q4QKM3"/>
<dbReference type="GeneID" id="93220359"/>
<dbReference type="KEGG" id="hit:NTHI1625"/>
<dbReference type="HOGENOM" id="CLU_016891_0_0_6"/>
<dbReference type="Proteomes" id="UP000002525">
    <property type="component" value="Chromosome"/>
</dbReference>
<dbReference type="GO" id="GO:0009328">
    <property type="term" value="C:phenylalanine-tRNA ligase complex"/>
    <property type="evidence" value="ECO:0007669"/>
    <property type="project" value="TreeGrafter"/>
</dbReference>
<dbReference type="GO" id="GO:0005524">
    <property type="term" value="F:ATP binding"/>
    <property type="evidence" value="ECO:0007669"/>
    <property type="project" value="UniProtKB-UniRule"/>
</dbReference>
<dbReference type="GO" id="GO:0000287">
    <property type="term" value="F:magnesium ion binding"/>
    <property type="evidence" value="ECO:0007669"/>
    <property type="project" value="UniProtKB-UniRule"/>
</dbReference>
<dbReference type="GO" id="GO:0004826">
    <property type="term" value="F:phenylalanine-tRNA ligase activity"/>
    <property type="evidence" value="ECO:0007669"/>
    <property type="project" value="UniProtKB-UniRule"/>
</dbReference>
<dbReference type="GO" id="GO:0000049">
    <property type="term" value="F:tRNA binding"/>
    <property type="evidence" value="ECO:0007669"/>
    <property type="project" value="UniProtKB-KW"/>
</dbReference>
<dbReference type="GO" id="GO:0006432">
    <property type="term" value="P:phenylalanyl-tRNA aminoacylation"/>
    <property type="evidence" value="ECO:0007669"/>
    <property type="project" value="UniProtKB-UniRule"/>
</dbReference>
<dbReference type="CDD" id="cd00769">
    <property type="entry name" value="PheRS_beta_core"/>
    <property type="match status" value="1"/>
</dbReference>
<dbReference type="CDD" id="cd02796">
    <property type="entry name" value="tRNA_bind_bactPheRS"/>
    <property type="match status" value="1"/>
</dbReference>
<dbReference type="FunFam" id="2.40.50.140:FF:000045">
    <property type="entry name" value="Phenylalanine--tRNA ligase beta subunit"/>
    <property type="match status" value="1"/>
</dbReference>
<dbReference type="FunFam" id="3.30.56.10:FF:000002">
    <property type="entry name" value="Phenylalanine--tRNA ligase beta subunit"/>
    <property type="match status" value="1"/>
</dbReference>
<dbReference type="FunFam" id="3.30.70.380:FF:000001">
    <property type="entry name" value="Phenylalanine--tRNA ligase beta subunit"/>
    <property type="match status" value="1"/>
</dbReference>
<dbReference type="FunFam" id="3.30.930.10:FF:000022">
    <property type="entry name" value="Phenylalanine--tRNA ligase beta subunit"/>
    <property type="match status" value="1"/>
</dbReference>
<dbReference type="FunFam" id="3.50.40.10:FF:000001">
    <property type="entry name" value="Phenylalanine--tRNA ligase beta subunit"/>
    <property type="match status" value="1"/>
</dbReference>
<dbReference type="Gene3D" id="3.30.56.10">
    <property type="match status" value="2"/>
</dbReference>
<dbReference type="Gene3D" id="3.30.930.10">
    <property type="entry name" value="Bira Bifunctional Protein, Domain 2"/>
    <property type="match status" value="1"/>
</dbReference>
<dbReference type="Gene3D" id="3.30.70.380">
    <property type="entry name" value="Ferrodoxin-fold anticodon-binding domain"/>
    <property type="match status" value="1"/>
</dbReference>
<dbReference type="Gene3D" id="2.40.50.140">
    <property type="entry name" value="Nucleic acid-binding proteins"/>
    <property type="match status" value="1"/>
</dbReference>
<dbReference type="Gene3D" id="3.50.40.10">
    <property type="entry name" value="Phenylalanyl-trna Synthetase, Chain B, domain 3"/>
    <property type="match status" value="1"/>
</dbReference>
<dbReference type="HAMAP" id="MF_00283">
    <property type="entry name" value="Phe_tRNA_synth_beta1"/>
    <property type="match status" value="1"/>
</dbReference>
<dbReference type="InterPro" id="IPR045864">
    <property type="entry name" value="aa-tRNA-synth_II/BPL/LPL"/>
</dbReference>
<dbReference type="InterPro" id="IPR005146">
    <property type="entry name" value="B3/B4_tRNA-bd"/>
</dbReference>
<dbReference type="InterPro" id="IPR009061">
    <property type="entry name" value="DNA-bd_dom_put_sf"/>
</dbReference>
<dbReference type="InterPro" id="IPR005121">
    <property type="entry name" value="Fdx_antiC-bd"/>
</dbReference>
<dbReference type="InterPro" id="IPR036690">
    <property type="entry name" value="Fdx_antiC-bd_sf"/>
</dbReference>
<dbReference type="InterPro" id="IPR012340">
    <property type="entry name" value="NA-bd_OB-fold"/>
</dbReference>
<dbReference type="InterPro" id="IPR045060">
    <property type="entry name" value="Phe-tRNA-ligase_IIc_bsu"/>
</dbReference>
<dbReference type="InterPro" id="IPR004532">
    <property type="entry name" value="Phe-tRNA-ligase_IIc_bsu_bact"/>
</dbReference>
<dbReference type="InterPro" id="IPR020825">
    <property type="entry name" value="Phe-tRNA_synthase-like_B3/B4"/>
</dbReference>
<dbReference type="InterPro" id="IPR041616">
    <property type="entry name" value="PheRS_beta_core"/>
</dbReference>
<dbReference type="InterPro" id="IPR002547">
    <property type="entry name" value="tRNA-bd_dom"/>
</dbReference>
<dbReference type="InterPro" id="IPR033714">
    <property type="entry name" value="tRNA_bind_bactPheRS"/>
</dbReference>
<dbReference type="InterPro" id="IPR005147">
    <property type="entry name" value="tRNA_synthase_B5-dom"/>
</dbReference>
<dbReference type="NCBIfam" id="TIGR00472">
    <property type="entry name" value="pheT_bact"/>
    <property type="match status" value="1"/>
</dbReference>
<dbReference type="NCBIfam" id="NF045760">
    <property type="entry name" value="YtpR"/>
    <property type="match status" value="1"/>
</dbReference>
<dbReference type="PANTHER" id="PTHR10947:SF0">
    <property type="entry name" value="PHENYLALANINE--TRNA LIGASE BETA SUBUNIT"/>
    <property type="match status" value="1"/>
</dbReference>
<dbReference type="PANTHER" id="PTHR10947">
    <property type="entry name" value="PHENYLALANYL-TRNA SYNTHETASE BETA CHAIN AND LEUCINE-RICH REPEAT-CONTAINING PROTEIN 47"/>
    <property type="match status" value="1"/>
</dbReference>
<dbReference type="Pfam" id="PF03483">
    <property type="entry name" value="B3_4"/>
    <property type="match status" value="1"/>
</dbReference>
<dbReference type="Pfam" id="PF03484">
    <property type="entry name" value="B5"/>
    <property type="match status" value="1"/>
</dbReference>
<dbReference type="Pfam" id="PF03147">
    <property type="entry name" value="FDX-ACB"/>
    <property type="match status" value="1"/>
</dbReference>
<dbReference type="Pfam" id="PF01588">
    <property type="entry name" value="tRNA_bind"/>
    <property type="match status" value="1"/>
</dbReference>
<dbReference type="Pfam" id="PF17759">
    <property type="entry name" value="tRNA_synthFbeta"/>
    <property type="match status" value="1"/>
</dbReference>
<dbReference type="SMART" id="SM00873">
    <property type="entry name" value="B3_4"/>
    <property type="match status" value="1"/>
</dbReference>
<dbReference type="SMART" id="SM00874">
    <property type="entry name" value="B5"/>
    <property type="match status" value="1"/>
</dbReference>
<dbReference type="SMART" id="SM00896">
    <property type="entry name" value="FDX-ACB"/>
    <property type="match status" value="1"/>
</dbReference>
<dbReference type="SUPFAM" id="SSF54991">
    <property type="entry name" value="Anticodon-binding domain of PheRS"/>
    <property type="match status" value="1"/>
</dbReference>
<dbReference type="SUPFAM" id="SSF55681">
    <property type="entry name" value="Class II aaRS and biotin synthetases"/>
    <property type="match status" value="1"/>
</dbReference>
<dbReference type="SUPFAM" id="SSF50249">
    <property type="entry name" value="Nucleic acid-binding proteins"/>
    <property type="match status" value="1"/>
</dbReference>
<dbReference type="SUPFAM" id="SSF56037">
    <property type="entry name" value="PheT/TilS domain"/>
    <property type="match status" value="1"/>
</dbReference>
<dbReference type="SUPFAM" id="SSF46955">
    <property type="entry name" value="Putative DNA-binding domain"/>
    <property type="match status" value="1"/>
</dbReference>
<dbReference type="PROSITE" id="PS51483">
    <property type="entry name" value="B5"/>
    <property type="match status" value="1"/>
</dbReference>
<dbReference type="PROSITE" id="PS51447">
    <property type="entry name" value="FDX_ACB"/>
    <property type="match status" value="1"/>
</dbReference>
<dbReference type="PROSITE" id="PS50886">
    <property type="entry name" value="TRBD"/>
    <property type="match status" value="1"/>
</dbReference>
<proteinExistence type="inferred from homology"/>
<comment type="catalytic activity">
    <reaction evidence="1">
        <text>tRNA(Phe) + L-phenylalanine + ATP = L-phenylalanyl-tRNA(Phe) + AMP + diphosphate + H(+)</text>
        <dbReference type="Rhea" id="RHEA:19413"/>
        <dbReference type="Rhea" id="RHEA-COMP:9668"/>
        <dbReference type="Rhea" id="RHEA-COMP:9699"/>
        <dbReference type="ChEBI" id="CHEBI:15378"/>
        <dbReference type="ChEBI" id="CHEBI:30616"/>
        <dbReference type="ChEBI" id="CHEBI:33019"/>
        <dbReference type="ChEBI" id="CHEBI:58095"/>
        <dbReference type="ChEBI" id="CHEBI:78442"/>
        <dbReference type="ChEBI" id="CHEBI:78531"/>
        <dbReference type="ChEBI" id="CHEBI:456215"/>
        <dbReference type="EC" id="6.1.1.20"/>
    </reaction>
</comment>
<comment type="cofactor">
    <cofactor evidence="1">
        <name>Mg(2+)</name>
        <dbReference type="ChEBI" id="CHEBI:18420"/>
    </cofactor>
    <text evidence="1">Binds 2 magnesium ions per tetramer.</text>
</comment>
<comment type="subunit">
    <text evidence="1">Tetramer of two alpha and two beta subunits.</text>
</comment>
<comment type="subcellular location">
    <subcellularLocation>
        <location evidence="1">Cytoplasm</location>
    </subcellularLocation>
</comment>
<comment type="similarity">
    <text evidence="1">Belongs to the phenylalanyl-tRNA synthetase beta subunit family. Type 1 subfamily.</text>
</comment>
<keyword id="KW-0030">Aminoacyl-tRNA synthetase</keyword>
<keyword id="KW-0067">ATP-binding</keyword>
<keyword id="KW-0963">Cytoplasm</keyword>
<keyword id="KW-0436">Ligase</keyword>
<keyword id="KW-0460">Magnesium</keyword>
<keyword id="KW-0479">Metal-binding</keyword>
<keyword id="KW-0547">Nucleotide-binding</keyword>
<keyword id="KW-0648">Protein biosynthesis</keyword>
<keyword id="KW-0694">RNA-binding</keyword>
<keyword id="KW-0820">tRNA-binding</keyword>
<gene>
    <name evidence="1" type="primary">pheT</name>
    <name type="ordered locus">NTHI1625</name>
</gene>
<organism>
    <name type="scientific">Haemophilus influenzae (strain 86-028NP)</name>
    <dbReference type="NCBI Taxonomy" id="281310"/>
    <lineage>
        <taxon>Bacteria</taxon>
        <taxon>Pseudomonadati</taxon>
        <taxon>Pseudomonadota</taxon>
        <taxon>Gammaproteobacteria</taxon>
        <taxon>Pasteurellales</taxon>
        <taxon>Pasteurellaceae</taxon>
        <taxon>Haemophilus</taxon>
    </lineage>
</organism>
<reference key="1">
    <citation type="journal article" date="2005" name="J. Bacteriol.">
        <title>Genomic sequence of an otitis media isolate of nontypeable Haemophilus influenzae: comparative study with H. influenzae serotype d, strain KW20.</title>
        <authorList>
            <person name="Harrison A."/>
            <person name="Dyer D.W."/>
            <person name="Gillaspy A."/>
            <person name="Ray W.C."/>
            <person name="Mungur R."/>
            <person name="Carson M.B."/>
            <person name="Zhong H."/>
            <person name="Gipson J."/>
            <person name="Gipson M."/>
            <person name="Johnson L.S."/>
            <person name="Lewis L."/>
            <person name="Bakaletz L.O."/>
            <person name="Munson R.S. Jr."/>
        </authorList>
    </citation>
    <scope>NUCLEOTIDE SEQUENCE [LARGE SCALE GENOMIC DNA]</scope>
    <source>
        <strain>86-028NP</strain>
    </source>
</reference>
<protein>
    <recommendedName>
        <fullName evidence="1">Phenylalanine--tRNA ligase beta subunit</fullName>
        <ecNumber evidence="1">6.1.1.20</ecNumber>
    </recommendedName>
    <alternativeName>
        <fullName evidence="1">Phenylalanyl-tRNA synthetase beta subunit</fullName>
        <shortName evidence="1">PheRS</shortName>
    </alternativeName>
</protein>
<evidence type="ECO:0000255" key="1">
    <source>
        <dbReference type="HAMAP-Rule" id="MF_00283"/>
    </source>
</evidence>
<feature type="chain" id="PRO_0000232065" description="Phenylalanine--tRNA ligase beta subunit">
    <location>
        <begin position="1"/>
        <end position="795"/>
    </location>
</feature>
<feature type="domain" description="tRNA-binding" evidence="1">
    <location>
        <begin position="39"/>
        <end position="148"/>
    </location>
</feature>
<feature type="domain" description="B5" evidence="1">
    <location>
        <begin position="401"/>
        <end position="476"/>
    </location>
</feature>
<feature type="domain" description="FDX-ACB" evidence="1">
    <location>
        <begin position="701"/>
        <end position="794"/>
    </location>
</feature>
<feature type="binding site" evidence="1">
    <location>
        <position position="454"/>
    </location>
    <ligand>
        <name>Mg(2+)</name>
        <dbReference type="ChEBI" id="CHEBI:18420"/>
        <note>shared with alpha subunit</note>
    </ligand>
</feature>
<feature type="binding site" evidence="1">
    <location>
        <position position="460"/>
    </location>
    <ligand>
        <name>Mg(2+)</name>
        <dbReference type="ChEBI" id="CHEBI:18420"/>
        <note>shared with alpha subunit</note>
    </ligand>
</feature>
<feature type="binding site" evidence="1">
    <location>
        <position position="463"/>
    </location>
    <ligand>
        <name>Mg(2+)</name>
        <dbReference type="ChEBI" id="CHEBI:18420"/>
        <note>shared with alpha subunit</note>
    </ligand>
</feature>
<feature type="binding site" evidence="1">
    <location>
        <position position="464"/>
    </location>
    <ligand>
        <name>Mg(2+)</name>
        <dbReference type="ChEBI" id="CHEBI:18420"/>
        <note>shared with alpha subunit</note>
    </ligand>
</feature>
<name>SYFB_HAEI8</name>